<evidence type="ECO:0000250" key="1">
    <source>
        <dbReference type="UniProtKB" id="P0C1D0"/>
    </source>
</evidence>
<evidence type="ECO:0000250" key="2">
    <source>
        <dbReference type="UniProtKB" id="P50983"/>
    </source>
</evidence>
<evidence type="ECO:0000269" key="3">
    <source>
    </source>
</evidence>
<evidence type="ECO:0000303" key="4">
    <source>
    </source>
</evidence>
<evidence type="ECO:0000305" key="5"/>
<name>CA1D_CONRE</name>
<protein>
    <recommendedName>
        <fullName evidence="4">Alpha-conotoxin-like Reg1d</fullName>
    </recommendedName>
</protein>
<reference key="1">
    <citation type="journal article" date="2006" name="Prog. Mol. Subcell. Biol.">
        <title>Hyperhydroxylation: a new strategy for neuronal targeting by venomous marine molluscs.</title>
        <authorList>
            <person name="Franco A."/>
            <person name="Pisarewicz K."/>
            <person name="Moller C."/>
            <person name="Mora D."/>
            <person name="Fields G.B."/>
            <person name="Mari F."/>
        </authorList>
    </citation>
    <scope>PROTEIN SEQUENCE</scope>
    <scope>SUBCELLULAR LOCATION</scope>
    <scope>TISSUE SPECIFICITY</scope>
    <scope>AMIDATION AT CYS-12</scope>
    <source>
        <tissue>Venom</tissue>
    </source>
</reference>
<proteinExistence type="evidence at protein level"/>
<sequence length="12" mass="1338">GCCSDPRCKHEC</sequence>
<keyword id="KW-0008">Acetylcholine receptor inhibiting toxin</keyword>
<keyword id="KW-0027">Amidation</keyword>
<keyword id="KW-0903">Direct protein sequencing</keyword>
<keyword id="KW-1015">Disulfide bond</keyword>
<keyword id="KW-0872">Ion channel impairing toxin</keyword>
<keyword id="KW-0528">Neurotoxin</keyword>
<keyword id="KW-0629">Postsynaptic neurotoxin</keyword>
<keyword id="KW-0964">Secreted</keyword>
<keyword id="KW-0800">Toxin</keyword>
<dbReference type="ConoServer" id="29">
    <property type="toxin name" value="Reg1d"/>
</dbReference>
<dbReference type="GO" id="GO:0005576">
    <property type="term" value="C:extracellular region"/>
    <property type="evidence" value="ECO:0007669"/>
    <property type="project" value="UniProtKB-SubCell"/>
</dbReference>
<dbReference type="GO" id="GO:0035792">
    <property type="term" value="C:host cell postsynaptic membrane"/>
    <property type="evidence" value="ECO:0007669"/>
    <property type="project" value="UniProtKB-KW"/>
</dbReference>
<dbReference type="GO" id="GO:0030550">
    <property type="term" value="F:acetylcholine receptor inhibitor activity"/>
    <property type="evidence" value="ECO:0007669"/>
    <property type="project" value="UniProtKB-KW"/>
</dbReference>
<dbReference type="GO" id="GO:0099106">
    <property type="term" value="F:ion channel regulator activity"/>
    <property type="evidence" value="ECO:0007669"/>
    <property type="project" value="UniProtKB-KW"/>
</dbReference>
<dbReference type="GO" id="GO:0090729">
    <property type="term" value="F:toxin activity"/>
    <property type="evidence" value="ECO:0007669"/>
    <property type="project" value="UniProtKB-KW"/>
</dbReference>
<comment type="function">
    <text evidence="2">Alpha-conotoxins act on postsynaptic membranes, they bind to the nicotinic acetylcholine receptors (nAChR) and thus inhibit them.</text>
</comment>
<comment type="subcellular location">
    <subcellularLocation>
        <location evidence="3">Secreted</location>
    </subcellularLocation>
</comment>
<comment type="tissue specificity">
    <text evidence="3">Expressed by the venom duct.</text>
</comment>
<comment type="domain">
    <text evidence="5">The cysteine framework is I (CC-C-C). Alpha4/3 pattern.</text>
</comment>
<comment type="similarity">
    <text evidence="5">Belongs to the conotoxin A superfamily.</text>
</comment>
<accession>P85010</accession>
<organism>
    <name type="scientific">Conus regius</name>
    <name type="common">Crown cone</name>
    <dbReference type="NCBI Taxonomy" id="101314"/>
    <lineage>
        <taxon>Eukaryota</taxon>
        <taxon>Metazoa</taxon>
        <taxon>Spiralia</taxon>
        <taxon>Lophotrochozoa</taxon>
        <taxon>Mollusca</taxon>
        <taxon>Gastropoda</taxon>
        <taxon>Caenogastropoda</taxon>
        <taxon>Neogastropoda</taxon>
        <taxon>Conoidea</taxon>
        <taxon>Conidae</taxon>
        <taxon>Conus</taxon>
        <taxon>Stephanoconus</taxon>
    </lineage>
</organism>
<feature type="peptide" id="PRO_0000259386" description="Alpha-conotoxin-like Reg1d" evidence="3">
    <location>
        <begin position="1"/>
        <end position="12"/>
    </location>
</feature>
<feature type="modified residue" description="Cysteine amide" evidence="3">
    <location>
        <position position="12"/>
    </location>
</feature>
<feature type="disulfide bond" evidence="1">
    <location>
        <begin position="2"/>
        <end position="8"/>
    </location>
</feature>
<feature type="disulfide bond" evidence="1">
    <location>
        <begin position="3"/>
        <end position="12"/>
    </location>
</feature>